<sequence length="82" mass="8483">MENVLGLVALACGIIIGLGAIGACIGIALMGGKYLEASARQPELMNELQTKMFLLAGLIDAAFLIGVGIAMLFAFANPFVLK</sequence>
<comment type="function">
    <text evidence="1">F(1)F(0) ATP synthase produces ATP from ADP in the presence of a proton or sodium gradient. F-type ATPases consist of two structural domains, F(1) containing the extramembraneous catalytic core and F(0) containing the membrane proton channel, linked together by a central stalk and a peripheral stalk. During catalysis, ATP synthesis in the catalytic domain of F(1) is coupled via a rotary mechanism of the central stalk subunits to proton translocation.</text>
</comment>
<comment type="function">
    <text evidence="1">Key component of the F(0) channel; it plays a direct role in translocation across the membrane. A homomeric c-ring of between 10-14 subunits forms the central stalk rotor element with the F(1) delta and epsilon subunits.</text>
</comment>
<comment type="subunit">
    <text evidence="1">F-type ATPases have 2 components, F(1) - the catalytic core - and F(0) - the membrane proton channel. F(1) has five subunits: alpha(3), beta(3), gamma(1), delta(1), epsilon(1). F(0) has three main subunits: a(1), b(2) and c(10-14). The alpha and beta chains form an alternating ring which encloses part of the gamma chain. F(1) is attached to F(0) by a central stalk formed by the gamma and epsilon chains, while a peripheral stalk is formed by the delta and b chains.</text>
</comment>
<comment type="subcellular location">
    <subcellularLocation>
        <location evidence="1">Cell inner membrane</location>
        <topology evidence="1">Multi-pass membrane protein</topology>
    </subcellularLocation>
</comment>
<comment type="similarity">
    <text evidence="1">Belongs to the ATPase C chain family.</text>
</comment>
<keyword id="KW-0066">ATP synthesis</keyword>
<keyword id="KW-0997">Cell inner membrane</keyword>
<keyword id="KW-1003">Cell membrane</keyword>
<keyword id="KW-0138">CF(0)</keyword>
<keyword id="KW-0375">Hydrogen ion transport</keyword>
<keyword id="KW-0406">Ion transport</keyword>
<keyword id="KW-0446">Lipid-binding</keyword>
<keyword id="KW-0472">Membrane</keyword>
<keyword id="KW-1185">Reference proteome</keyword>
<keyword id="KW-0812">Transmembrane</keyword>
<keyword id="KW-1133">Transmembrane helix</keyword>
<keyword id="KW-0813">Transport</keyword>
<evidence type="ECO:0000255" key="1">
    <source>
        <dbReference type="HAMAP-Rule" id="MF_01396"/>
    </source>
</evidence>
<gene>
    <name evidence="1" type="primary">atpE</name>
    <name type="ordered locus">Lcho_3531</name>
</gene>
<accession>B1Y3T2</accession>
<dbReference type="EMBL" id="CP001013">
    <property type="protein sequence ID" value="ACB35785.1"/>
    <property type="molecule type" value="Genomic_DNA"/>
</dbReference>
<dbReference type="RefSeq" id="WP_012348532.1">
    <property type="nucleotide sequence ID" value="NC_010524.1"/>
</dbReference>
<dbReference type="SMR" id="B1Y3T2"/>
<dbReference type="STRING" id="395495.Lcho_3531"/>
<dbReference type="KEGG" id="lch:Lcho_3531"/>
<dbReference type="eggNOG" id="ENOG5032S3K">
    <property type="taxonomic scope" value="Bacteria"/>
</dbReference>
<dbReference type="HOGENOM" id="CLU_148047_1_0_4"/>
<dbReference type="OrthoDB" id="9811659at2"/>
<dbReference type="Proteomes" id="UP000001693">
    <property type="component" value="Chromosome"/>
</dbReference>
<dbReference type="GO" id="GO:0005886">
    <property type="term" value="C:plasma membrane"/>
    <property type="evidence" value="ECO:0007669"/>
    <property type="project" value="UniProtKB-SubCell"/>
</dbReference>
<dbReference type="GO" id="GO:0045259">
    <property type="term" value="C:proton-transporting ATP synthase complex"/>
    <property type="evidence" value="ECO:0007669"/>
    <property type="project" value="UniProtKB-KW"/>
</dbReference>
<dbReference type="GO" id="GO:0033177">
    <property type="term" value="C:proton-transporting two-sector ATPase complex, proton-transporting domain"/>
    <property type="evidence" value="ECO:0007669"/>
    <property type="project" value="InterPro"/>
</dbReference>
<dbReference type="GO" id="GO:0008289">
    <property type="term" value="F:lipid binding"/>
    <property type="evidence" value="ECO:0007669"/>
    <property type="project" value="UniProtKB-KW"/>
</dbReference>
<dbReference type="GO" id="GO:0046933">
    <property type="term" value="F:proton-transporting ATP synthase activity, rotational mechanism"/>
    <property type="evidence" value="ECO:0007669"/>
    <property type="project" value="UniProtKB-UniRule"/>
</dbReference>
<dbReference type="CDD" id="cd18185">
    <property type="entry name" value="ATP-synt_Fo_c_ATPE"/>
    <property type="match status" value="1"/>
</dbReference>
<dbReference type="FunFam" id="1.20.20.10:FF:000002">
    <property type="entry name" value="ATP synthase subunit c"/>
    <property type="match status" value="1"/>
</dbReference>
<dbReference type="Gene3D" id="1.20.20.10">
    <property type="entry name" value="F1F0 ATP synthase subunit C"/>
    <property type="match status" value="1"/>
</dbReference>
<dbReference type="HAMAP" id="MF_01396">
    <property type="entry name" value="ATP_synth_c_bact"/>
    <property type="match status" value="1"/>
</dbReference>
<dbReference type="InterPro" id="IPR005953">
    <property type="entry name" value="ATP_synth_csu_bac/chlpt"/>
</dbReference>
<dbReference type="InterPro" id="IPR000454">
    <property type="entry name" value="ATP_synth_F0_csu"/>
</dbReference>
<dbReference type="InterPro" id="IPR020537">
    <property type="entry name" value="ATP_synth_F0_csu_DDCD_BS"/>
</dbReference>
<dbReference type="InterPro" id="IPR038662">
    <property type="entry name" value="ATP_synth_F0_csu_sf"/>
</dbReference>
<dbReference type="InterPro" id="IPR002379">
    <property type="entry name" value="ATPase_proteolipid_c-like_dom"/>
</dbReference>
<dbReference type="InterPro" id="IPR035921">
    <property type="entry name" value="F/V-ATP_Csub_sf"/>
</dbReference>
<dbReference type="NCBIfam" id="TIGR01260">
    <property type="entry name" value="ATP_synt_c"/>
    <property type="match status" value="1"/>
</dbReference>
<dbReference type="NCBIfam" id="NF005363">
    <property type="entry name" value="PRK06876.1"/>
    <property type="match status" value="1"/>
</dbReference>
<dbReference type="Pfam" id="PF00137">
    <property type="entry name" value="ATP-synt_C"/>
    <property type="match status" value="1"/>
</dbReference>
<dbReference type="PRINTS" id="PR00124">
    <property type="entry name" value="ATPASEC"/>
</dbReference>
<dbReference type="SUPFAM" id="SSF81333">
    <property type="entry name" value="F1F0 ATP synthase subunit C"/>
    <property type="match status" value="1"/>
</dbReference>
<dbReference type="PROSITE" id="PS00605">
    <property type="entry name" value="ATPASE_C"/>
    <property type="match status" value="1"/>
</dbReference>
<organism>
    <name type="scientific">Leptothrix cholodnii (strain ATCC 51168 / LMG 8142 / SP-6)</name>
    <name type="common">Leptothrix discophora (strain SP-6)</name>
    <dbReference type="NCBI Taxonomy" id="395495"/>
    <lineage>
        <taxon>Bacteria</taxon>
        <taxon>Pseudomonadati</taxon>
        <taxon>Pseudomonadota</taxon>
        <taxon>Betaproteobacteria</taxon>
        <taxon>Burkholderiales</taxon>
        <taxon>Sphaerotilaceae</taxon>
        <taxon>Leptothrix</taxon>
    </lineage>
</organism>
<feature type="chain" id="PRO_1000184409" description="ATP synthase subunit c">
    <location>
        <begin position="1"/>
        <end position="82"/>
    </location>
</feature>
<feature type="transmembrane region" description="Helical" evidence="1">
    <location>
        <begin position="7"/>
        <end position="27"/>
    </location>
</feature>
<feature type="transmembrane region" description="Helical" evidence="1">
    <location>
        <begin position="53"/>
        <end position="73"/>
    </location>
</feature>
<feature type="site" description="Reversibly protonated during proton transport" evidence="1">
    <location>
        <position position="60"/>
    </location>
</feature>
<reference key="1">
    <citation type="submission" date="2008-03" db="EMBL/GenBank/DDBJ databases">
        <title>Complete sequence of Leptothrix cholodnii SP-6.</title>
        <authorList>
            <consortium name="US DOE Joint Genome Institute"/>
            <person name="Copeland A."/>
            <person name="Lucas S."/>
            <person name="Lapidus A."/>
            <person name="Glavina del Rio T."/>
            <person name="Dalin E."/>
            <person name="Tice H."/>
            <person name="Bruce D."/>
            <person name="Goodwin L."/>
            <person name="Pitluck S."/>
            <person name="Chertkov O."/>
            <person name="Brettin T."/>
            <person name="Detter J.C."/>
            <person name="Han C."/>
            <person name="Kuske C.R."/>
            <person name="Schmutz J."/>
            <person name="Larimer F."/>
            <person name="Land M."/>
            <person name="Hauser L."/>
            <person name="Kyrpides N."/>
            <person name="Lykidis A."/>
            <person name="Emerson D."/>
            <person name="Richardson P."/>
        </authorList>
    </citation>
    <scope>NUCLEOTIDE SEQUENCE [LARGE SCALE GENOMIC DNA]</scope>
    <source>
        <strain>ATCC 51168 / LMG 8142 / SP-6</strain>
    </source>
</reference>
<protein>
    <recommendedName>
        <fullName evidence="1">ATP synthase subunit c</fullName>
    </recommendedName>
    <alternativeName>
        <fullName evidence="1">ATP synthase F(0) sector subunit c</fullName>
    </alternativeName>
    <alternativeName>
        <fullName evidence="1">F-type ATPase subunit c</fullName>
        <shortName evidence="1">F-ATPase subunit c</shortName>
    </alternativeName>
    <alternativeName>
        <fullName evidence="1">Lipid-binding protein</fullName>
    </alternativeName>
</protein>
<name>ATPL_LEPCP</name>
<proteinExistence type="inferred from homology"/>